<geneLocation type="chloroplast"/>
<name>ATPF_CUCSA</name>
<protein>
    <recommendedName>
        <fullName evidence="1">ATP synthase subunit b, chloroplastic</fullName>
    </recommendedName>
    <alternativeName>
        <fullName evidence="1">ATP synthase F(0) sector subunit b</fullName>
    </alternativeName>
    <alternativeName>
        <fullName evidence="1">ATPase subunit I</fullName>
    </alternativeName>
</protein>
<feature type="chain" id="PRO_0000368924" description="ATP synthase subunit b, chloroplastic">
    <location>
        <begin position="1"/>
        <end position="184"/>
    </location>
</feature>
<feature type="transmembrane region" description="Helical" evidence="1">
    <location>
        <begin position="27"/>
        <end position="49"/>
    </location>
</feature>
<keyword id="KW-0066">ATP synthesis</keyword>
<keyword id="KW-0138">CF(0)</keyword>
<keyword id="KW-0150">Chloroplast</keyword>
<keyword id="KW-0375">Hydrogen ion transport</keyword>
<keyword id="KW-0406">Ion transport</keyword>
<keyword id="KW-0472">Membrane</keyword>
<keyword id="KW-0934">Plastid</keyword>
<keyword id="KW-0793">Thylakoid</keyword>
<keyword id="KW-0812">Transmembrane</keyword>
<keyword id="KW-1133">Transmembrane helix</keyword>
<keyword id="KW-0813">Transport</keyword>
<accession>Q4VZP7</accession>
<organism>
    <name type="scientific">Cucumis sativus</name>
    <name type="common">Cucumber</name>
    <dbReference type="NCBI Taxonomy" id="3659"/>
    <lineage>
        <taxon>Eukaryota</taxon>
        <taxon>Viridiplantae</taxon>
        <taxon>Streptophyta</taxon>
        <taxon>Embryophyta</taxon>
        <taxon>Tracheophyta</taxon>
        <taxon>Spermatophyta</taxon>
        <taxon>Magnoliopsida</taxon>
        <taxon>eudicotyledons</taxon>
        <taxon>Gunneridae</taxon>
        <taxon>Pentapetalae</taxon>
        <taxon>rosids</taxon>
        <taxon>fabids</taxon>
        <taxon>Cucurbitales</taxon>
        <taxon>Cucurbitaceae</taxon>
        <taxon>Benincaseae</taxon>
        <taxon>Cucumis</taxon>
    </lineage>
</organism>
<evidence type="ECO:0000255" key="1">
    <source>
        <dbReference type="HAMAP-Rule" id="MF_01398"/>
    </source>
</evidence>
<proteinExistence type="inferred from homology"/>
<comment type="function">
    <text evidence="1">F(1)F(0) ATP synthase produces ATP from ADP in the presence of a proton or sodium gradient. F-type ATPases consist of two structural domains, F(1) containing the extramembraneous catalytic core and F(0) containing the membrane proton channel, linked together by a central stalk and a peripheral stalk. During catalysis, ATP synthesis in the catalytic domain of F(1) is coupled via a rotary mechanism of the central stalk subunits to proton translocation.</text>
</comment>
<comment type="function">
    <text evidence="1">Component of the F(0) channel, it forms part of the peripheral stalk, linking F(1) to F(0).</text>
</comment>
<comment type="subunit">
    <text evidence="1">F-type ATPases have 2 components, F(1) - the catalytic core - and F(0) - the membrane proton channel. F(1) has five subunits: alpha(3), beta(3), gamma(1), delta(1), epsilon(1). F(0) has four main subunits: a(1), b(1), b'(1) and c(10-14). The alpha and beta chains form an alternating ring which encloses part of the gamma chain. F(1) is attached to F(0) by a central stalk formed by the gamma and epsilon chains, while a peripheral stalk is formed by the delta, b and b' chains.</text>
</comment>
<comment type="subcellular location">
    <subcellularLocation>
        <location evidence="1">Plastid</location>
        <location evidence="1">Chloroplast thylakoid membrane</location>
        <topology evidence="1">Single-pass membrane protein</topology>
    </subcellularLocation>
</comment>
<comment type="miscellaneous">
    <text>In plastids the F-type ATPase is also known as CF(1)CF(0).</text>
</comment>
<comment type="similarity">
    <text evidence="1">Belongs to the ATPase B chain family.</text>
</comment>
<dbReference type="EMBL" id="DQ119058">
    <property type="protein sequence ID" value="AAZ94638.1"/>
    <property type="molecule type" value="Genomic_DNA"/>
</dbReference>
<dbReference type="EMBL" id="DQ865975">
    <property type="protein sequence ID" value="ABI97403.1"/>
    <property type="molecule type" value="Genomic_DNA"/>
</dbReference>
<dbReference type="EMBL" id="DQ865976">
    <property type="protein sequence ID" value="ABI98731.1"/>
    <property type="molecule type" value="Genomic_DNA"/>
</dbReference>
<dbReference type="EMBL" id="AJ970307">
    <property type="protein sequence ID" value="CAJ00744.1"/>
    <property type="molecule type" value="Genomic_DNA"/>
</dbReference>
<dbReference type="RefSeq" id="YP_247585.1">
    <property type="nucleotide sequence ID" value="NC_007144.1"/>
</dbReference>
<dbReference type="SMR" id="Q4VZP7"/>
<dbReference type="GeneID" id="3429377"/>
<dbReference type="KEGG" id="csv:3429377"/>
<dbReference type="OrthoDB" id="1900203at2759"/>
<dbReference type="GO" id="GO:0009535">
    <property type="term" value="C:chloroplast thylakoid membrane"/>
    <property type="evidence" value="ECO:0007669"/>
    <property type="project" value="UniProtKB-SubCell"/>
</dbReference>
<dbReference type="GO" id="GO:0045259">
    <property type="term" value="C:proton-transporting ATP synthase complex"/>
    <property type="evidence" value="ECO:0007669"/>
    <property type="project" value="UniProtKB-KW"/>
</dbReference>
<dbReference type="GO" id="GO:0046933">
    <property type="term" value="F:proton-transporting ATP synthase activity, rotational mechanism"/>
    <property type="evidence" value="ECO:0007669"/>
    <property type="project" value="UniProtKB-UniRule"/>
</dbReference>
<dbReference type="CDD" id="cd06503">
    <property type="entry name" value="ATP-synt_Fo_b"/>
    <property type="match status" value="1"/>
</dbReference>
<dbReference type="HAMAP" id="MF_01398">
    <property type="entry name" value="ATP_synth_b_bprime"/>
    <property type="match status" value="1"/>
</dbReference>
<dbReference type="InterPro" id="IPR002146">
    <property type="entry name" value="ATP_synth_b/b'su_bac/chlpt"/>
</dbReference>
<dbReference type="PANTHER" id="PTHR34264">
    <property type="entry name" value="ATP SYNTHASE SUBUNIT B, CHLOROPLASTIC"/>
    <property type="match status" value="1"/>
</dbReference>
<dbReference type="PANTHER" id="PTHR34264:SF3">
    <property type="entry name" value="ATP SYNTHASE SUBUNIT B, CHLOROPLASTIC"/>
    <property type="match status" value="1"/>
</dbReference>
<dbReference type="Pfam" id="PF00430">
    <property type="entry name" value="ATP-synt_B"/>
    <property type="match status" value="1"/>
</dbReference>
<gene>
    <name evidence="1" type="primary">atpF</name>
    <name type="ordered locus">CsCp012</name>
</gene>
<reference key="1">
    <citation type="journal article" date="2006" name="Plant Cell Rep.">
        <title>Complete sequence and organization of the cucumber (Cucumis sativus L. cv. Baekmibaekdadagi) chloroplast genome.</title>
        <authorList>
            <person name="Kim J.-S."/>
            <person name="Jung J.D."/>
            <person name="Lee J.-A."/>
            <person name="Park H.-W."/>
            <person name="Oh K.-H."/>
            <person name="Jeong W.J."/>
            <person name="Choi D.-W."/>
            <person name="Liu J.R."/>
            <person name="Cho K.Y."/>
        </authorList>
    </citation>
    <scope>NUCLEOTIDE SEQUENCE [LARGE SCALE GENOMIC DNA]</scope>
    <source>
        <strain>cv. Baekmibaekdadagi</strain>
    </source>
</reference>
<reference key="2">
    <citation type="journal article" date="2007" name="Cell. Mol. Biol. Lett.">
        <title>The complete structure of the cucumber (Cucumis sativus L.) chloroplast genome: its composition and comparative analysis.</title>
        <authorList>
            <person name="Plader W.W."/>
            <person name="Yukawa Y."/>
            <person name="Sugiura M."/>
            <person name="Malepszy S."/>
        </authorList>
    </citation>
    <scope>NUCLEOTIDE SEQUENCE [LARGE SCALE GENOMIC DNA]</scope>
    <source>
        <strain>cv. Borszczagowski</strain>
    </source>
</reference>
<reference key="3">
    <citation type="journal article" date="2007" name="Genome">
        <title>Sequencing cucumber (Cucumis sativus L.) chloroplast genomes identifies differences between chilling-tolerant and -susceptible cucumber lines.</title>
        <authorList>
            <person name="Chung S.-M."/>
            <person name="Gordon V.S."/>
            <person name="Staub J.E."/>
        </authorList>
    </citation>
    <scope>NUCLEOTIDE SEQUENCE [LARGE SCALE GENOMIC DNA]</scope>
    <source>
        <strain>cv. Chipper</strain>
        <strain>cv. Gy14</strain>
    </source>
</reference>
<sequence>MKNVTDSFISLGYWPSAESFGFNTDILATNPINLSVVLGVLIFFGKGVLSDLLDNRKQRILKTIQNSEELRGGAIEQLEKARARLRKVEMEADQFRVNGYSEIEREKLNLINSTSKSLEQLENYKNETIRFEQQKAINQVRQQVFQQALQGALGTLNSCLDNELHLRTISANIGMFGTMKEITN</sequence>